<gene>
    <name type="primary">Actn3</name>
</gene>
<sequence>MMMVMQPEGLGAGEGPFSGGGGGEYMEQEEDWDRDLLLDPAWEKQQRKTFTAWCNSHLRKAGTQIENIEEDFRNGLKLMLLLEVISGERLPRPDKGKMRFHKIANVNKALDFIASKGVKLVSIGAEEIVDGNLKMTLGMIWTIILRFAIQDISVEETSAKEGLLLWCQRKTAPYRNVNVQNFHTSWKDGLALCALIHRHRPDLIDYAKLRKDDPIGNLNTAFEVAEKYLDIPKMLDAEDIVNTPKPDEKAIMTYVSCFYHAFAGAEQAETAANRICKVLAVNQENEKLMEEYEKLASELLEWIRRTVPWLENRVGEPSMSAMQRKLEDFRDYRRLHKPPRVQEKCQLEINFNTLQTKLRLSHRPAFMPSEGKLVSDIANAWRGLEQVEKGYEDWLLSEIRRLQRLQHLAEKFQQKASLHEAWTRGKEEMLNQHDYESASLQEVRALLRRHEAFESDLAAHQDRVEHIAALAQELNELDYHEAASVNSRCQAICDQWDNLGTLTQKRRDALERMEKLLETIDQLQLEFARRAAPFNNWLDGAIEDLQDVWLVHSVEETQSLLTAHEQFKATLPEADRERGAILGIQGEIQKICQTYGLRPKSGNPYITLSSQDINNKWDTVRKLVPSRDQTLQEELARQQVNERLRRQFAAQANAIGPWIQGKVEEVGRLAAGLAGSLEEQMAGLRQQEQNIINYKSNIDRLEGDHQLLQESLVFDNKHTVYSMEHIRVGWEQLLTSIARTINEVENQVLTRDAKGLSQEQLNEFRASFNHFDRKRNGMMEPDDFRACLISMGYDLGEVEFARIMTMVDPNAAGVVTFQAFIDFMTRETAETDTAEQVVASFKILAGDKNYITPEELRRELPAEQAEYCIRRMAPYKGSGAPSGALDYVAFSSALYGESDL</sequence>
<reference key="1">
    <citation type="submission" date="1998-09" db="EMBL/GenBank/DDBJ databases">
        <authorList>
            <person name="Birkenmeier C.S."/>
            <person name="Gifford E.J."/>
            <person name="Barker J.E."/>
        </authorList>
    </citation>
    <scope>NUCLEOTIDE SEQUENCE [MRNA]</scope>
    <source>
        <strain>C57BL/6J</strain>
        <tissue>Skeletal muscle</tissue>
    </source>
</reference>
<reference key="2">
    <citation type="journal article" date="2004" name="Genome Res.">
        <title>The status, quality, and expansion of the NIH full-length cDNA project: the Mammalian Gene Collection (MGC).</title>
        <authorList>
            <consortium name="The MGC Project Team"/>
        </authorList>
    </citation>
    <scope>NUCLEOTIDE SEQUENCE [LARGE SCALE MRNA]</scope>
</reference>
<reference key="3">
    <citation type="journal article" date="1999" name="Nat. Genet.">
        <title>A common nonsense mutation results in alpha-actinin-3 deficiency in the general population.</title>
        <authorList>
            <person name="North K.N."/>
            <person name="Yang N."/>
            <person name="Wattanasirichaigoon D."/>
            <person name="Mills M."/>
            <person name="Easteal S."/>
            <person name="Beggs A.H."/>
        </authorList>
    </citation>
    <scope>TISSUE SPECIFICITY</scope>
</reference>
<reference key="4">
    <citation type="journal article" date="2007" name="Nat. Genet.">
        <title>Loss of ACTN3 gene function alters mouse muscle metabolism and shows evidence of positive selection in humans.</title>
        <authorList>
            <person name="MacArthur D.G."/>
            <person name="Seto J.T."/>
            <person name="Raftery J.M."/>
            <person name="Quinlan K.G."/>
            <person name="Huttley G.A."/>
            <person name="Hook J.W."/>
            <person name="Lemckert F.A."/>
            <person name="Kee A.J."/>
            <person name="Edwards M.R."/>
            <person name="Berman Y."/>
            <person name="Hardeman E.C."/>
            <person name="Gunning P.W."/>
            <person name="Easteal S."/>
            <person name="Yang N."/>
            <person name="North K.N."/>
        </authorList>
    </citation>
    <scope>DISRUPTION PHENOTYPE</scope>
</reference>
<reference key="5">
    <citation type="journal article" date="2008" name="Hum. Mol. Genet.">
        <title>An Actn3 knockout mouse provides mechanistic insights into the association between alpha-actinin-3 deficiency and human athletic performance.</title>
        <authorList>
            <person name="MacArthur D.G."/>
            <person name="Seto J.T."/>
            <person name="Chan S."/>
            <person name="Quinlan K.G."/>
            <person name="Raftery J.M."/>
            <person name="Turner N."/>
            <person name="Nicholson M.D."/>
            <person name="Kee A.J."/>
            <person name="Hardeman E.C."/>
            <person name="Gunning P.W."/>
            <person name="Cooney G.J."/>
            <person name="Head S.I."/>
            <person name="Yang N."/>
            <person name="North K.N."/>
        </authorList>
    </citation>
    <scope>DISRUPTION PHENOTYPE</scope>
</reference>
<reference key="6">
    <citation type="journal article" date="2010" name="Hum. Mol. Genet.">
        <title>Alpha-actinin-3 deficiency results in reduced glycogen phosphorylase activity and altered calcium handling in skeletal muscle.</title>
        <authorList>
            <person name="Quinlan K.G."/>
            <person name="Seto J.T."/>
            <person name="Turner N."/>
            <person name="Vandebrouck A."/>
            <person name="Floetenmeyer M."/>
            <person name="Macarthur D.G."/>
            <person name="Raftery J.M."/>
            <person name="Lek M."/>
            <person name="Yang N."/>
            <person name="Parton R.G."/>
            <person name="Cooney G.J."/>
            <person name="North K.N."/>
        </authorList>
    </citation>
    <scope>DISRUPTION PHENOTYPE</scope>
    <scope>DEVELOPMENTAL STAGE</scope>
</reference>
<name>ACTN3_MOUSE</name>
<dbReference type="EMBL" id="AF093775">
    <property type="protein sequence ID" value="AAC62512.1"/>
    <property type="molecule type" value="mRNA"/>
</dbReference>
<dbReference type="EMBL" id="BC111890">
    <property type="protein sequence ID" value="AAI11891.1"/>
    <property type="molecule type" value="mRNA"/>
</dbReference>
<dbReference type="CCDS" id="CCDS29441.1"/>
<dbReference type="RefSeq" id="NP_038484.1">
    <property type="nucleotide sequence ID" value="NM_013456.2"/>
</dbReference>
<dbReference type="SMR" id="O88990"/>
<dbReference type="BioGRID" id="197951">
    <property type="interactions" value="10"/>
</dbReference>
<dbReference type="FunCoup" id="O88990">
    <property type="interactions" value="152"/>
</dbReference>
<dbReference type="IntAct" id="O88990">
    <property type="interactions" value="3"/>
</dbReference>
<dbReference type="MINT" id="O88990"/>
<dbReference type="STRING" id="10090.ENSMUSP00000006626"/>
<dbReference type="GlyGen" id="O88990">
    <property type="glycosylation" value="3 sites, 1 O-linked glycan (3 sites)"/>
</dbReference>
<dbReference type="iPTMnet" id="O88990"/>
<dbReference type="PhosphoSitePlus" id="O88990"/>
<dbReference type="jPOST" id="O88990"/>
<dbReference type="PaxDb" id="10090-ENSMUSP00000006626"/>
<dbReference type="PeptideAtlas" id="O88990"/>
<dbReference type="ProteomicsDB" id="285720"/>
<dbReference type="Antibodypedia" id="73518">
    <property type="antibodies" value="259 antibodies from 30 providers"/>
</dbReference>
<dbReference type="DNASU" id="11474"/>
<dbReference type="Ensembl" id="ENSMUST00000006626.5">
    <property type="protein sequence ID" value="ENSMUSP00000006626.4"/>
    <property type="gene ID" value="ENSMUSG00000006457.5"/>
</dbReference>
<dbReference type="GeneID" id="11474"/>
<dbReference type="KEGG" id="mmu:11474"/>
<dbReference type="UCSC" id="uc008gbf.2">
    <property type="organism name" value="mouse"/>
</dbReference>
<dbReference type="AGR" id="MGI:99678"/>
<dbReference type="CTD" id="89"/>
<dbReference type="MGI" id="MGI:99678">
    <property type="gene designation" value="Actn3"/>
</dbReference>
<dbReference type="VEuPathDB" id="HostDB:ENSMUSG00000006457"/>
<dbReference type="eggNOG" id="KOG0035">
    <property type="taxonomic scope" value="Eukaryota"/>
</dbReference>
<dbReference type="GeneTree" id="ENSGT00940000153968"/>
<dbReference type="HOGENOM" id="CLU_005217_1_1_1"/>
<dbReference type="InParanoid" id="O88990"/>
<dbReference type="OMA" id="YNHSYMV"/>
<dbReference type="OrthoDB" id="10017054at2759"/>
<dbReference type="PhylomeDB" id="O88990"/>
<dbReference type="TreeFam" id="TF352676"/>
<dbReference type="Reactome" id="R-MMU-390522">
    <property type="pathway name" value="Striated Muscle Contraction"/>
</dbReference>
<dbReference type="BioGRID-ORCS" id="11474">
    <property type="hits" value="0 hits in 78 CRISPR screens"/>
</dbReference>
<dbReference type="CD-CODE" id="CE726F99">
    <property type="entry name" value="Postsynaptic density"/>
</dbReference>
<dbReference type="ChiTaRS" id="Actn3">
    <property type="organism name" value="mouse"/>
</dbReference>
<dbReference type="PRO" id="PR:O88990"/>
<dbReference type="Proteomes" id="UP000000589">
    <property type="component" value="Chromosome 19"/>
</dbReference>
<dbReference type="RNAct" id="O88990">
    <property type="molecule type" value="protein"/>
</dbReference>
<dbReference type="Bgee" id="ENSMUSG00000006457">
    <property type="expression patterns" value="Expressed in triceps brachii and 135 other cell types or tissues"/>
</dbReference>
<dbReference type="GO" id="GO:0005903">
    <property type="term" value="C:brush border"/>
    <property type="evidence" value="ECO:0000314"/>
    <property type="project" value="UniProtKB"/>
</dbReference>
<dbReference type="GO" id="GO:0005925">
    <property type="term" value="C:focal adhesion"/>
    <property type="evidence" value="ECO:0007669"/>
    <property type="project" value="Ensembl"/>
</dbReference>
<dbReference type="GO" id="GO:0030017">
    <property type="term" value="C:sarcomere"/>
    <property type="evidence" value="ECO:0000314"/>
    <property type="project" value="MGI"/>
</dbReference>
<dbReference type="GO" id="GO:0005865">
    <property type="term" value="C:striated muscle thin filament"/>
    <property type="evidence" value="ECO:0000304"/>
    <property type="project" value="MGI"/>
</dbReference>
<dbReference type="GO" id="GO:0030018">
    <property type="term" value="C:Z disc"/>
    <property type="evidence" value="ECO:0000314"/>
    <property type="project" value="MGI"/>
</dbReference>
<dbReference type="GO" id="GO:0051015">
    <property type="term" value="F:actin filament binding"/>
    <property type="evidence" value="ECO:0000314"/>
    <property type="project" value="MGI"/>
</dbReference>
<dbReference type="GO" id="GO:0005509">
    <property type="term" value="F:calcium ion binding"/>
    <property type="evidence" value="ECO:0007669"/>
    <property type="project" value="InterPro"/>
</dbReference>
<dbReference type="GO" id="GO:0042802">
    <property type="term" value="F:identical protein binding"/>
    <property type="evidence" value="ECO:0007669"/>
    <property type="project" value="Ensembl"/>
</dbReference>
<dbReference type="GO" id="GO:0030674">
    <property type="term" value="F:protein-macromolecule adaptor activity"/>
    <property type="evidence" value="ECO:0000304"/>
    <property type="project" value="MGI"/>
</dbReference>
<dbReference type="GO" id="GO:0044325">
    <property type="term" value="F:transmembrane transporter binding"/>
    <property type="evidence" value="ECO:0007669"/>
    <property type="project" value="Ensembl"/>
</dbReference>
<dbReference type="GO" id="GO:0060349">
    <property type="term" value="P:bone morphogenesis"/>
    <property type="evidence" value="ECO:0000315"/>
    <property type="project" value="UniProtKB"/>
</dbReference>
<dbReference type="GO" id="GO:0048041">
    <property type="term" value="P:focal adhesion assembly"/>
    <property type="evidence" value="ECO:0007669"/>
    <property type="project" value="Ensembl"/>
</dbReference>
<dbReference type="GO" id="GO:0006936">
    <property type="term" value="P:muscle contraction"/>
    <property type="evidence" value="ECO:0000304"/>
    <property type="project" value="MGI"/>
</dbReference>
<dbReference type="GO" id="GO:0070885">
    <property type="term" value="P:negative regulation of calcineurin-NFAT signaling cascade"/>
    <property type="evidence" value="ECO:0000315"/>
    <property type="project" value="UniProtKB"/>
</dbReference>
<dbReference type="GO" id="GO:0120163">
    <property type="term" value="P:negative regulation of cold-induced thermogenesis"/>
    <property type="evidence" value="ECO:0000315"/>
    <property type="project" value="YuBioLab"/>
</dbReference>
<dbReference type="GO" id="GO:0045820">
    <property type="term" value="P:negative regulation of glycolytic process"/>
    <property type="evidence" value="ECO:0000315"/>
    <property type="project" value="UniProtKB"/>
</dbReference>
<dbReference type="GO" id="GO:0090324">
    <property type="term" value="P:negative regulation of oxidative phosphorylation"/>
    <property type="evidence" value="ECO:0000315"/>
    <property type="project" value="UniProtKB"/>
</dbReference>
<dbReference type="GO" id="GO:1901078">
    <property type="term" value="P:negative regulation of relaxation of muscle"/>
    <property type="evidence" value="ECO:0000315"/>
    <property type="project" value="UniProtKB"/>
</dbReference>
<dbReference type="GO" id="GO:1900159">
    <property type="term" value="P:positive regulation of bone mineralization involved in bone maturation"/>
    <property type="evidence" value="ECO:0000315"/>
    <property type="project" value="UniProtKB"/>
</dbReference>
<dbReference type="GO" id="GO:0031448">
    <property type="term" value="P:positive regulation of fast-twitch skeletal muscle fiber contraction"/>
    <property type="evidence" value="ECO:0000315"/>
    <property type="project" value="UniProtKB"/>
</dbReference>
<dbReference type="GO" id="GO:1904025">
    <property type="term" value="P:positive regulation of glucose catabolic process to lactate via pyruvate"/>
    <property type="evidence" value="ECO:0000315"/>
    <property type="project" value="UniProtKB"/>
</dbReference>
<dbReference type="GO" id="GO:0048743">
    <property type="term" value="P:positive regulation of skeletal muscle fiber development"/>
    <property type="evidence" value="ECO:0000315"/>
    <property type="project" value="UniProtKB"/>
</dbReference>
<dbReference type="GO" id="GO:0048633">
    <property type="term" value="P:positive regulation of skeletal muscle tissue growth"/>
    <property type="evidence" value="ECO:0000315"/>
    <property type="project" value="UniProtKB"/>
</dbReference>
<dbReference type="GO" id="GO:1903715">
    <property type="term" value="P:regulation of aerobic respiration"/>
    <property type="evidence" value="ECO:0000315"/>
    <property type="project" value="UniProtKB"/>
</dbReference>
<dbReference type="GO" id="GO:0090257">
    <property type="term" value="P:regulation of muscle system process"/>
    <property type="evidence" value="ECO:0000315"/>
    <property type="project" value="UniProtKB"/>
</dbReference>
<dbReference type="GO" id="GO:0014728">
    <property type="term" value="P:regulation of the force of skeletal muscle contraction"/>
    <property type="evidence" value="ECO:0000315"/>
    <property type="project" value="UniProtKB"/>
</dbReference>
<dbReference type="GO" id="GO:0014894">
    <property type="term" value="P:response to denervation involved in regulation of muscle adaptation"/>
    <property type="evidence" value="ECO:0000315"/>
    <property type="project" value="UniProtKB"/>
</dbReference>
<dbReference type="GO" id="GO:0014732">
    <property type="term" value="P:skeletal muscle atrophy"/>
    <property type="evidence" value="ECO:0000315"/>
    <property type="project" value="UniProtKB"/>
</dbReference>
<dbReference type="GO" id="GO:0014883">
    <property type="term" value="P:transition between fast and slow fiber"/>
    <property type="evidence" value="ECO:0000315"/>
    <property type="project" value="UniProtKB"/>
</dbReference>
<dbReference type="CDD" id="cd21214">
    <property type="entry name" value="CH_ACTN_rpt1"/>
    <property type="match status" value="1"/>
</dbReference>
<dbReference type="CDD" id="cd21216">
    <property type="entry name" value="CH_ACTN_rpt2"/>
    <property type="match status" value="1"/>
</dbReference>
<dbReference type="CDD" id="cd00051">
    <property type="entry name" value="EFh"/>
    <property type="match status" value="1"/>
</dbReference>
<dbReference type="CDD" id="cd00176">
    <property type="entry name" value="SPEC"/>
    <property type="match status" value="3"/>
</dbReference>
<dbReference type="FunFam" id="1.10.238.10:FF:000004">
    <property type="entry name" value="Actinin alpha 1"/>
    <property type="match status" value="1"/>
</dbReference>
<dbReference type="FunFam" id="1.10.418.10:FF:000001">
    <property type="entry name" value="Actinin alpha 1"/>
    <property type="match status" value="1"/>
</dbReference>
<dbReference type="FunFam" id="1.20.58.60:FF:000004">
    <property type="entry name" value="Actinin alpha 1"/>
    <property type="match status" value="1"/>
</dbReference>
<dbReference type="FunFam" id="1.20.58.60:FF:000005">
    <property type="entry name" value="Actinin alpha 1"/>
    <property type="match status" value="1"/>
</dbReference>
<dbReference type="FunFam" id="1.10.238.10:FF:000156">
    <property type="entry name" value="Actinin alpha 4"/>
    <property type="match status" value="1"/>
</dbReference>
<dbReference type="FunFam" id="1.10.418.10:FF:000005">
    <property type="entry name" value="Actinin alpha 4"/>
    <property type="match status" value="1"/>
</dbReference>
<dbReference type="FunFam" id="1.20.58.60:FF:000002">
    <property type="entry name" value="Actinin, alpha 1"/>
    <property type="match status" value="1"/>
</dbReference>
<dbReference type="FunFam" id="1.20.58.60:FF:000003">
    <property type="entry name" value="Actinin, alpha 1"/>
    <property type="match status" value="1"/>
</dbReference>
<dbReference type="Gene3D" id="1.20.58.60">
    <property type="match status" value="4"/>
</dbReference>
<dbReference type="Gene3D" id="1.10.418.10">
    <property type="entry name" value="Calponin-like domain"/>
    <property type="match status" value="2"/>
</dbReference>
<dbReference type="Gene3D" id="1.10.238.10">
    <property type="entry name" value="EF-hand"/>
    <property type="match status" value="2"/>
</dbReference>
<dbReference type="InterPro" id="IPR001589">
    <property type="entry name" value="Actinin_actin-bd_CS"/>
</dbReference>
<dbReference type="InterPro" id="IPR001715">
    <property type="entry name" value="CH_dom"/>
</dbReference>
<dbReference type="InterPro" id="IPR036872">
    <property type="entry name" value="CH_dom_sf"/>
</dbReference>
<dbReference type="InterPro" id="IPR011992">
    <property type="entry name" value="EF-hand-dom_pair"/>
</dbReference>
<dbReference type="InterPro" id="IPR014837">
    <property type="entry name" value="EF-hand_Ca_insen"/>
</dbReference>
<dbReference type="InterPro" id="IPR002048">
    <property type="entry name" value="EF_hand_dom"/>
</dbReference>
<dbReference type="InterPro" id="IPR018159">
    <property type="entry name" value="Spectrin/alpha-actinin"/>
</dbReference>
<dbReference type="InterPro" id="IPR002017">
    <property type="entry name" value="Spectrin_repeat"/>
</dbReference>
<dbReference type="PANTHER" id="PTHR11915">
    <property type="entry name" value="SPECTRIN/FILAMIN RELATED CYTOSKELETAL PROTEIN"/>
    <property type="match status" value="1"/>
</dbReference>
<dbReference type="Pfam" id="PF00307">
    <property type="entry name" value="CH"/>
    <property type="match status" value="2"/>
</dbReference>
<dbReference type="Pfam" id="PF08726">
    <property type="entry name" value="EFhand_Ca_insen"/>
    <property type="match status" value="1"/>
</dbReference>
<dbReference type="Pfam" id="PF00435">
    <property type="entry name" value="Spectrin"/>
    <property type="match status" value="4"/>
</dbReference>
<dbReference type="SMART" id="SM00033">
    <property type="entry name" value="CH"/>
    <property type="match status" value="2"/>
</dbReference>
<dbReference type="SMART" id="SM00054">
    <property type="entry name" value="EFh"/>
    <property type="match status" value="2"/>
</dbReference>
<dbReference type="SMART" id="SM01184">
    <property type="entry name" value="efhand_Ca_insen"/>
    <property type="match status" value="1"/>
</dbReference>
<dbReference type="SMART" id="SM00150">
    <property type="entry name" value="SPEC"/>
    <property type="match status" value="2"/>
</dbReference>
<dbReference type="SUPFAM" id="SSF47576">
    <property type="entry name" value="Calponin-homology domain, CH-domain"/>
    <property type="match status" value="1"/>
</dbReference>
<dbReference type="SUPFAM" id="SSF47473">
    <property type="entry name" value="EF-hand"/>
    <property type="match status" value="1"/>
</dbReference>
<dbReference type="SUPFAM" id="SSF46966">
    <property type="entry name" value="Spectrin repeat"/>
    <property type="match status" value="4"/>
</dbReference>
<dbReference type="PROSITE" id="PS00019">
    <property type="entry name" value="ACTININ_1"/>
    <property type="match status" value="1"/>
</dbReference>
<dbReference type="PROSITE" id="PS00020">
    <property type="entry name" value="ACTININ_2"/>
    <property type="match status" value="1"/>
</dbReference>
<dbReference type="PROSITE" id="PS50021">
    <property type="entry name" value="CH"/>
    <property type="match status" value="2"/>
</dbReference>
<dbReference type="PROSITE" id="PS50222">
    <property type="entry name" value="EF_HAND_2"/>
    <property type="match status" value="2"/>
</dbReference>
<protein>
    <recommendedName>
        <fullName>Alpha-actinin-3</fullName>
    </recommendedName>
    <alternativeName>
        <fullName>Alpha-actinin skeletal muscle isoform 3</fullName>
    </alternativeName>
    <alternativeName>
        <fullName>F-actin cross-linking protein</fullName>
    </alternativeName>
</protein>
<evidence type="ECO:0000250" key="1"/>
<evidence type="ECO:0000250" key="2">
    <source>
        <dbReference type="UniProtKB" id="Q08043"/>
    </source>
</evidence>
<evidence type="ECO:0000255" key="3">
    <source>
        <dbReference type="PROSITE-ProRule" id="PRU00044"/>
    </source>
</evidence>
<evidence type="ECO:0000255" key="4">
    <source>
        <dbReference type="PROSITE-ProRule" id="PRU00448"/>
    </source>
</evidence>
<evidence type="ECO:0000256" key="5">
    <source>
        <dbReference type="SAM" id="MobiDB-lite"/>
    </source>
</evidence>
<evidence type="ECO:0000269" key="6">
    <source>
    </source>
</evidence>
<evidence type="ECO:0000269" key="7">
    <source>
    </source>
</evidence>
<evidence type="ECO:0000269" key="8">
    <source>
    </source>
</evidence>
<evidence type="ECO:0000269" key="9">
    <source>
    </source>
</evidence>
<evidence type="ECO:0000305" key="10"/>
<accession>O88990</accession>
<accession>Q14DS8</accession>
<keyword id="KW-0007">Acetylation</keyword>
<keyword id="KW-0009">Actin-binding</keyword>
<keyword id="KW-0106">Calcium</keyword>
<keyword id="KW-0479">Metal-binding</keyword>
<keyword id="KW-1185">Reference proteome</keyword>
<keyword id="KW-0677">Repeat</keyword>
<proteinExistence type="evidence at protein level"/>
<comment type="function">
    <text evidence="1">F-actin cross-linking protein which is thought to anchor actin to a variety of intracellular structures. This is a bundling protein (By similarity).</text>
</comment>
<comment type="subunit">
    <text evidence="2">Homodimer; antiparallel. Also forms heterodimers with ACTN2. Interacts with MYOZ1 (By similarity).</text>
</comment>
<comment type="tissue specificity">
    <text evidence="6">Expression restricted to skeletal muscle fast (type 2) fibers (at protein level).</text>
</comment>
<comment type="developmental stage">
    <text evidence="9">Undetectable in newborn mice. Starts to be detected in muscle at postnatal week 1. Expression increases over time until at least week 8 (at the protein level).</text>
</comment>
<comment type="disruption phenotype">
    <text evidence="7 8 9">Knockout mice are morphologically indistinguishable from their wild-type littermates (PubMed:17828264, PubMed:18178581). Their ambulatory activity, and exploratory behavior is similar to that of wild-type animals. They show no sign of severe weakness and fatigue sensitivity (PubMed:18178581). However, knockout animals show reductions in muscle strength (grip strength), increased endurance capacity, reduced fast fiber size, shifts in fast fiber metabolism toward oxidative (aerobic) metabolism (PubMed:17828264, PubMed:18178581). In addition, knockout animals have higher muscle glycogen content and a reduced activity of muscle glycogen phosphorylase PYGM/GPh, compared to wild-type (PubMed:20089531).</text>
</comment>
<comment type="similarity">
    <text evidence="10">Belongs to the alpha-actinin family.</text>
</comment>
<organism>
    <name type="scientific">Mus musculus</name>
    <name type="common">Mouse</name>
    <dbReference type="NCBI Taxonomy" id="10090"/>
    <lineage>
        <taxon>Eukaryota</taxon>
        <taxon>Metazoa</taxon>
        <taxon>Chordata</taxon>
        <taxon>Craniata</taxon>
        <taxon>Vertebrata</taxon>
        <taxon>Euteleostomi</taxon>
        <taxon>Mammalia</taxon>
        <taxon>Eutheria</taxon>
        <taxon>Euarchontoglires</taxon>
        <taxon>Glires</taxon>
        <taxon>Rodentia</taxon>
        <taxon>Myomorpha</taxon>
        <taxon>Muroidea</taxon>
        <taxon>Muridae</taxon>
        <taxon>Murinae</taxon>
        <taxon>Mus</taxon>
        <taxon>Mus</taxon>
    </lineage>
</organism>
<feature type="chain" id="PRO_0000073439" description="Alpha-actinin-3">
    <location>
        <begin position="1"/>
        <end position="900"/>
    </location>
</feature>
<feature type="domain" description="Calponin-homology (CH) 1" evidence="3">
    <location>
        <begin position="44"/>
        <end position="148"/>
    </location>
</feature>
<feature type="domain" description="Calponin-homology (CH) 2" evidence="3">
    <location>
        <begin position="157"/>
        <end position="263"/>
    </location>
</feature>
<feature type="repeat" description="Spectrin 1">
    <location>
        <begin position="287"/>
        <end position="397"/>
    </location>
</feature>
<feature type="repeat" description="Spectrin 2">
    <location>
        <begin position="407"/>
        <end position="512"/>
    </location>
</feature>
<feature type="repeat" description="Spectrin 3">
    <location>
        <begin position="522"/>
        <end position="633"/>
    </location>
</feature>
<feature type="repeat" description="Spectrin 4">
    <location>
        <begin position="643"/>
        <end position="746"/>
    </location>
</feature>
<feature type="domain" description="EF-hand 1" evidence="4">
    <location>
        <begin position="759"/>
        <end position="794"/>
    </location>
</feature>
<feature type="domain" description="EF-hand 2" evidence="4">
    <location>
        <begin position="795"/>
        <end position="830"/>
    </location>
</feature>
<feature type="region of interest" description="Actin-binding">
    <location>
        <begin position="1"/>
        <end position="260"/>
    </location>
</feature>
<feature type="region of interest" description="Disordered" evidence="5">
    <location>
        <begin position="1"/>
        <end position="26"/>
    </location>
</feature>
<feature type="compositionally biased region" description="Gly residues" evidence="5">
    <location>
        <begin position="10"/>
        <end position="24"/>
    </location>
</feature>
<feature type="binding site" evidence="10">
    <location>
        <position position="772"/>
    </location>
    <ligand>
        <name>Ca(2+)</name>
        <dbReference type="ChEBI" id="CHEBI:29108"/>
        <label>1</label>
    </ligand>
</feature>
<feature type="binding site" evidence="10">
    <location>
        <position position="776"/>
    </location>
    <ligand>
        <name>Ca(2+)</name>
        <dbReference type="ChEBI" id="CHEBI:29108"/>
        <label>1</label>
    </ligand>
</feature>
<feature type="binding site" evidence="10">
    <location>
        <position position="778"/>
    </location>
    <ligand>
        <name>Ca(2+)</name>
        <dbReference type="ChEBI" id="CHEBI:29108"/>
        <label>1</label>
    </ligand>
</feature>
<feature type="binding site" evidence="10">
    <location>
        <position position="783"/>
    </location>
    <ligand>
        <name>Ca(2+)</name>
        <dbReference type="ChEBI" id="CHEBI:29108"/>
        <label>1</label>
    </ligand>
</feature>
<feature type="binding site" evidence="10">
    <location>
        <position position="808"/>
    </location>
    <ligand>
        <name>Ca(2+)</name>
        <dbReference type="ChEBI" id="CHEBI:29108"/>
        <label>2</label>
    </ligand>
</feature>
<feature type="binding site" evidence="10">
    <location>
        <position position="810"/>
    </location>
    <ligand>
        <name>Ca(2+)</name>
        <dbReference type="ChEBI" id="CHEBI:29108"/>
        <label>2</label>
    </ligand>
</feature>
<feature type="modified residue" description="N-acetylmethionine" evidence="2">
    <location>
        <position position="1"/>
    </location>
</feature>